<accession>Q5AUJ1</accession>
<accession>C8V603</accession>
<keyword id="KW-0007">Acetylation</keyword>
<keyword id="KW-0010">Activator</keyword>
<keyword id="KW-0156">Chromatin regulator</keyword>
<keyword id="KW-0158">Chromosome</keyword>
<keyword id="KW-0238">DNA-binding</keyword>
<keyword id="KW-0544">Nucleosome core</keyword>
<keyword id="KW-0539">Nucleus</keyword>
<keyword id="KW-1185">Reference proteome</keyword>
<keyword id="KW-0804">Transcription</keyword>
<keyword id="KW-0805">Transcription regulation</keyword>
<protein>
    <recommendedName>
        <fullName>Histone H2A.Z</fullName>
    </recommendedName>
</protein>
<evidence type="ECO:0000250" key="1"/>
<evidence type="ECO:0000256" key="2">
    <source>
        <dbReference type="SAM" id="MobiDB-lite"/>
    </source>
</evidence>
<evidence type="ECO:0000305" key="3"/>
<gene>
    <name type="primary">htz1</name>
    <name type="ORF">AN8039</name>
</gene>
<reference key="1">
    <citation type="journal article" date="2005" name="Nature">
        <title>Sequencing of Aspergillus nidulans and comparative analysis with A. fumigatus and A. oryzae.</title>
        <authorList>
            <person name="Galagan J.E."/>
            <person name="Calvo S.E."/>
            <person name="Cuomo C."/>
            <person name="Ma L.-J."/>
            <person name="Wortman J.R."/>
            <person name="Batzoglou S."/>
            <person name="Lee S.-I."/>
            <person name="Bastuerkmen M."/>
            <person name="Spevak C.C."/>
            <person name="Clutterbuck J."/>
            <person name="Kapitonov V."/>
            <person name="Jurka J."/>
            <person name="Scazzocchio C."/>
            <person name="Farman M.L."/>
            <person name="Butler J."/>
            <person name="Purcell S."/>
            <person name="Harris S."/>
            <person name="Braus G.H."/>
            <person name="Draht O."/>
            <person name="Busch S."/>
            <person name="D'Enfert C."/>
            <person name="Bouchier C."/>
            <person name="Goldman G.H."/>
            <person name="Bell-Pedersen D."/>
            <person name="Griffiths-Jones S."/>
            <person name="Doonan J.H."/>
            <person name="Yu J."/>
            <person name="Vienken K."/>
            <person name="Pain A."/>
            <person name="Freitag M."/>
            <person name="Selker E.U."/>
            <person name="Archer D.B."/>
            <person name="Penalva M.A."/>
            <person name="Oakley B.R."/>
            <person name="Momany M."/>
            <person name="Tanaka T."/>
            <person name="Kumagai T."/>
            <person name="Asai K."/>
            <person name="Machida M."/>
            <person name="Nierman W.C."/>
            <person name="Denning D.W."/>
            <person name="Caddick M.X."/>
            <person name="Hynes M."/>
            <person name="Paoletti M."/>
            <person name="Fischer R."/>
            <person name="Miller B.L."/>
            <person name="Dyer P.S."/>
            <person name="Sachs M.S."/>
            <person name="Osmani S.A."/>
            <person name="Birren B.W."/>
        </authorList>
    </citation>
    <scope>NUCLEOTIDE SEQUENCE [LARGE SCALE GENOMIC DNA]</scope>
    <source>
        <strain>FGSC A4 / ATCC 38163 / CBS 112.46 / NRRL 194 / M139</strain>
    </source>
</reference>
<reference key="2">
    <citation type="journal article" date="2009" name="Fungal Genet. Biol.">
        <title>The 2008 update of the Aspergillus nidulans genome annotation: a community effort.</title>
        <authorList>
            <person name="Wortman J.R."/>
            <person name="Gilsenan J.M."/>
            <person name="Joardar V."/>
            <person name="Deegan J."/>
            <person name="Clutterbuck J."/>
            <person name="Andersen M.R."/>
            <person name="Archer D."/>
            <person name="Bencina M."/>
            <person name="Braus G."/>
            <person name="Coutinho P."/>
            <person name="von Dohren H."/>
            <person name="Doonan J."/>
            <person name="Driessen A.J."/>
            <person name="Durek P."/>
            <person name="Espeso E."/>
            <person name="Fekete E."/>
            <person name="Flipphi M."/>
            <person name="Estrada C.G."/>
            <person name="Geysens S."/>
            <person name="Goldman G."/>
            <person name="de Groot P.W."/>
            <person name="Hansen K."/>
            <person name="Harris S.D."/>
            <person name="Heinekamp T."/>
            <person name="Helmstaedt K."/>
            <person name="Henrissat B."/>
            <person name="Hofmann G."/>
            <person name="Homan T."/>
            <person name="Horio T."/>
            <person name="Horiuchi H."/>
            <person name="James S."/>
            <person name="Jones M."/>
            <person name="Karaffa L."/>
            <person name="Karanyi Z."/>
            <person name="Kato M."/>
            <person name="Keller N."/>
            <person name="Kelly D.E."/>
            <person name="Kiel J.A."/>
            <person name="Kim J.M."/>
            <person name="van der Klei I.J."/>
            <person name="Klis F.M."/>
            <person name="Kovalchuk A."/>
            <person name="Krasevec N."/>
            <person name="Kubicek C.P."/>
            <person name="Liu B."/>
            <person name="Maccabe A."/>
            <person name="Meyer V."/>
            <person name="Mirabito P."/>
            <person name="Miskei M."/>
            <person name="Mos M."/>
            <person name="Mullins J."/>
            <person name="Nelson D.R."/>
            <person name="Nielsen J."/>
            <person name="Oakley B.R."/>
            <person name="Osmani S.A."/>
            <person name="Pakula T."/>
            <person name="Paszewski A."/>
            <person name="Paulsen I."/>
            <person name="Pilsyk S."/>
            <person name="Pocsi I."/>
            <person name="Punt P.J."/>
            <person name="Ram A.F."/>
            <person name="Ren Q."/>
            <person name="Robellet X."/>
            <person name="Robson G."/>
            <person name="Seiboth B."/>
            <person name="van Solingen P."/>
            <person name="Specht T."/>
            <person name="Sun J."/>
            <person name="Taheri-Talesh N."/>
            <person name="Takeshita N."/>
            <person name="Ussery D."/>
            <person name="vanKuyk P.A."/>
            <person name="Visser H."/>
            <person name="van de Vondervoort P.J."/>
            <person name="de Vries R.P."/>
            <person name="Walton J."/>
            <person name="Xiang X."/>
            <person name="Xiong Y."/>
            <person name="Zeng A.P."/>
            <person name="Brandt B.W."/>
            <person name="Cornell M.J."/>
            <person name="van den Hondel C.A."/>
            <person name="Visser J."/>
            <person name="Oliver S.G."/>
            <person name="Turner G."/>
        </authorList>
    </citation>
    <scope>GENOME REANNOTATION</scope>
    <source>
        <strain>FGSC A4 / ATCC 38163 / CBS 112.46 / NRRL 194 / M139</strain>
    </source>
</reference>
<organism>
    <name type="scientific">Emericella nidulans (strain FGSC A4 / ATCC 38163 / CBS 112.46 / NRRL 194 / M139)</name>
    <name type="common">Aspergillus nidulans</name>
    <dbReference type="NCBI Taxonomy" id="227321"/>
    <lineage>
        <taxon>Eukaryota</taxon>
        <taxon>Fungi</taxon>
        <taxon>Dikarya</taxon>
        <taxon>Ascomycota</taxon>
        <taxon>Pezizomycotina</taxon>
        <taxon>Eurotiomycetes</taxon>
        <taxon>Eurotiomycetidae</taxon>
        <taxon>Eurotiales</taxon>
        <taxon>Aspergillaceae</taxon>
        <taxon>Aspergillus</taxon>
        <taxon>Aspergillus subgen. Nidulantes</taxon>
    </lineage>
</organism>
<name>H2AZ_EMENI</name>
<comment type="function">
    <text evidence="1">Variant histone H2A which can replace H2A in some nucleosomes. Nucleosomes wrap and compact DNA into chromatin, limiting DNA accessibility to the cellular machineries which require DNA as a template. Histones thereby play a central role in transcription regulation, DNA repair, DNA replication and chromosomal stability. DNA accessibility is regulated via a complex set of post-translational modifications of histones, also called histone code, and nucleosome remodeling. This variant is enriched at promoters, it may keep them in a repressed state until the appropriate activation signal is received. Near telomeres, it may counteract gene silencing caused by the spread of heterochromatin proteins. Required for the RNA polymerase II and spt15/TBP recruitment to the target genes. Involved in chromosome stability (By similarity).</text>
</comment>
<comment type="subunit">
    <text evidence="1">The nucleosome is a histone octamer containing two molecules each of H2A, H2B, H3 and H4 assembled in one H3-H4 heterotetramer and two H2A-H2B heterodimers. The octamer wraps approximately 147 bp of DNA. H2A or its variant H2A.Z forms a heterodimer with H2B. H2A.Z associates with the vps72/swc2 subunit of the SWR1 chromatin remodeling complex. Also interacts with rbp1/DNA-directed RNA polymerase II largest subunit (By similarity).</text>
</comment>
<comment type="subcellular location">
    <subcellularLocation>
        <location evidence="1">Nucleus</location>
    </subcellularLocation>
    <subcellularLocation>
        <location evidence="1">Chromosome</location>
    </subcellularLocation>
</comment>
<comment type="PTM">
    <text evidence="1">Acetylated once deposited into chromatin.</text>
</comment>
<comment type="similarity">
    <text evidence="3">Belongs to the histone H2A family.</text>
</comment>
<proteinExistence type="inferred from homology"/>
<dbReference type="EMBL" id="AACD01000139">
    <property type="protein sequence ID" value="EAA59661.1"/>
    <property type="molecule type" value="Genomic_DNA"/>
</dbReference>
<dbReference type="EMBL" id="BN001302">
    <property type="protein sequence ID" value="CBF73756.1"/>
    <property type="molecule type" value="Genomic_DNA"/>
</dbReference>
<dbReference type="RefSeq" id="XP_681308.1">
    <property type="nucleotide sequence ID" value="XM_676216.1"/>
</dbReference>
<dbReference type="SMR" id="Q5AUJ1"/>
<dbReference type="FunCoup" id="Q5AUJ1">
    <property type="interactions" value="1010"/>
</dbReference>
<dbReference type="STRING" id="227321.Q5AUJ1"/>
<dbReference type="EnsemblFungi" id="CBF73756">
    <property type="protein sequence ID" value="CBF73756"/>
    <property type="gene ID" value="ANIA_08039"/>
</dbReference>
<dbReference type="KEGG" id="ani:ANIA_08039"/>
<dbReference type="VEuPathDB" id="FungiDB:AN8039"/>
<dbReference type="eggNOG" id="KOG1757">
    <property type="taxonomic scope" value="Eukaryota"/>
</dbReference>
<dbReference type="HOGENOM" id="CLU_062828_2_1_1"/>
<dbReference type="InParanoid" id="Q5AUJ1"/>
<dbReference type="OMA" id="MNKKGAP"/>
<dbReference type="OrthoDB" id="9421954at2759"/>
<dbReference type="Proteomes" id="UP000000560">
    <property type="component" value="Chromosome II"/>
</dbReference>
<dbReference type="GO" id="GO:0000791">
    <property type="term" value="C:euchromatin"/>
    <property type="evidence" value="ECO:0007669"/>
    <property type="project" value="EnsemblFungi"/>
</dbReference>
<dbReference type="GO" id="GO:0000786">
    <property type="term" value="C:nucleosome"/>
    <property type="evidence" value="ECO:0000318"/>
    <property type="project" value="GO_Central"/>
</dbReference>
<dbReference type="GO" id="GO:0005634">
    <property type="term" value="C:nucleus"/>
    <property type="evidence" value="ECO:0000318"/>
    <property type="project" value="GO_Central"/>
</dbReference>
<dbReference type="GO" id="GO:0031490">
    <property type="term" value="F:chromatin DNA binding"/>
    <property type="evidence" value="ECO:0007669"/>
    <property type="project" value="EnsemblFungi"/>
</dbReference>
<dbReference type="GO" id="GO:0042802">
    <property type="term" value="F:identical protein binding"/>
    <property type="evidence" value="ECO:0007669"/>
    <property type="project" value="EnsemblFungi"/>
</dbReference>
<dbReference type="GO" id="GO:0046982">
    <property type="term" value="F:protein heterodimerization activity"/>
    <property type="evidence" value="ECO:0007669"/>
    <property type="project" value="InterPro"/>
</dbReference>
<dbReference type="GO" id="GO:0000978">
    <property type="term" value="F:RNA polymerase II cis-regulatory region sequence-specific DNA binding"/>
    <property type="evidence" value="ECO:0007669"/>
    <property type="project" value="EnsemblFungi"/>
</dbReference>
<dbReference type="GO" id="GO:0030527">
    <property type="term" value="F:structural constituent of chromatin"/>
    <property type="evidence" value="ECO:0000318"/>
    <property type="project" value="GO_Central"/>
</dbReference>
<dbReference type="GO" id="GO:0140898">
    <property type="term" value="P:CENP-A eviction from euchromatin"/>
    <property type="evidence" value="ECO:0007669"/>
    <property type="project" value="EnsemblFungi"/>
</dbReference>
<dbReference type="GO" id="GO:0031507">
    <property type="term" value="P:heterochromatin formation"/>
    <property type="evidence" value="ECO:0000318"/>
    <property type="project" value="GO_Central"/>
</dbReference>
<dbReference type="GO" id="GO:0070481">
    <property type="term" value="P:nuclear-transcribed mRNA catabolic process, non-stop decay"/>
    <property type="evidence" value="ECO:0007669"/>
    <property type="project" value="EnsemblFungi"/>
</dbReference>
<dbReference type="GO" id="GO:0006357">
    <property type="term" value="P:regulation of transcription by RNA polymerase II"/>
    <property type="evidence" value="ECO:0007669"/>
    <property type="project" value="EnsemblFungi"/>
</dbReference>
<dbReference type="GO" id="GO:0030466">
    <property type="term" value="P:silent mating-type cassette heterochromatin formation"/>
    <property type="evidence" value="ECO:0007669"/>
    <property type="project" value="EnsemblFungi"/>
</dbReference>
<dbReference type="GO" id="GO:0006368">
    <property type="term" value="P:transcription elongation by RNA polymerase II"/>
    <property type="evidence" value="ECO:0007669"/>
    <property type="project" value="EnsemblFungi"/>
</dbReference>
<dbReference type="CDD" id="cd00074">
    <property type="entry name" value="HFD_H2A"/>
    <property type="match status" value="1"/>
</dbReference>
<dbReference type="FunFam" id="1.10.20.10:FF:000021">
    <property type="entry name" value="Histone H2A"/>
    <property type="match status" value="1"/>
</dbReference>
<dbReference type="Gene3D" id="1.10.20.10">
    <property type="entry name" value="Histone, subunit A"/>
    <property type="match status" value="1"/>
</dbReference>
<dbReference type="InterPro" id="IPR009072">
    <property type="entry name" value="Histone-fold"/>
</dbReference>
<dbReference type="InterPro" id="IPR002119">
    <property type="entry name" value="Histone_H2A"/>
</dbReference>
<dbReference type="InterPro" id="IPR007125">
    <property type="entry name" value="Histone_H2A/H2B/H3"/>
</dbReference>
<dbReference type="InterPro" id="IPR032454">
    <property type="entry name" value="Histone_H2A_C"/>
</dbReference>
<dbReference type="PANTHER" id="PTHR23430">
    <property type="entry name" value="HISTONE H2A"/>
    <property type="match status" value="1"/>
</dbReference>
<dbReference type="Pfam" id="PF00125">
    <property type="entry name" value="Histone"/>
    <property type="match status" value="1"/>
</dbReference>
<dbReference type="Pfam" id="PF16211">
    <property type="entry name" value="Histone_H2A_C"/>
    <property type="match status" value="1"/>
</dbReference>
<dbReference type="PRINTS" id="PR00620">
    <property type="entry name" value="HISTONEH2A"/>
</dbReference>
<dbReference type="SMART" id="SM00414">
    <property type="entry name" value="H2A"/>
    <property type="match status" value="1"/>
</dbReference>
<dbReference type="SUPFAM" id="SSF47113">
    <property type="entry name" value="Histone-fold"/>
    <property type="match status" value="1"/>
</dbReference>
<feature type="chain" id="PRO_0000055333" description="Histone H2A.Z">
    <location>
        <begin position="1"/>
        <end position="136"/>
    </location>
</feature>
<feature type="region of interest" description="Disordered" evidence="2">
    <location>
        <begin position="1"/>
        <end position="32"/>
    </location>
</feature>
<feature type="compositionally biased region" description="Gly residues" evidence="2">
    <location>
        <begin position="1"/>
        <end position="13"/>
    </location>
</feature>
<feature type="modified residue" description="N6-acetyllysine" evidence="1">
    <location>
        <position position="5"/>
    </location>
</feature>
<feature type="modified residue" description="N6-acetyllysine" evidence="1">
    <location>
        <position position="12"/>
    </location>
</feature>
<sequence>MPGGKGKSIGGKAGSKDSAGKAQKSHSAKAGLQFPCGRVKRFLKNNTQNKMRVGAKAAVYVTAVLEYLTAEVLELAGNAAKDLKVKRITPRHLQLAIRGDEELDTLIRATIAFGGVLPRINRALLLKVEQKKKKDA</sequence>